<organism>
    <name type="scientific">Actinobacillus succinogenes (strain ATCC 55618 / DSM 22257 / CCUG 43843 / 130Z)</name>
    <dbReference type="NCBI Taxonomy" id="339671"/>
    <lineage>
        <taxon>Bacteria</taxon>
        <taxon>Pseudomonadati</taxon>
        <taxon>Pseudomonadota</taxon>
        <taxon>Gammaproteobacteria</taxon>
        <taxon>Pasteurellales</taxon>
        <taxon>Pasteurellaceae</taxon>
        <taxon>Actinobacillus</taxon>
    </lineage>
</organism>
<protein>
    <recommendedName>
        <fullName evidence="1">23S rRNA (uracil(747)-C(5))-methyltransferase RlmC</fullName>
        <ecNumber evidence="1">2.1.1.189</ecNumber>
    </recommendedName>
    <alternativeName>
        <fullName evidence="1">23S rRNA(m5U747)-methyltransferase</fullName>
    </alternativeName>
</protein>
<name>RLMC_ACTSZ</name>
<dbReference type="EC" id="2.1.1.189" evidence="1"/>
<dbReference type="EMBL" id="CP000746">
    <property type="protein sequence ID" value="ABR73592.1"/>
    <property type="molecule type" value="Genomic_DNA"/>
</dbReference>
<dbReference type="RefSeq" id="WP_011978868.1">
    <property type="nucleotide sequence ID" value="NC_009655.1"/>
</dbReference>
<dbReference type="SMR" id="A6VKU5"/>
<dbReference type="STRING" id="339671.Asuc_0212"/>
<dbReference type="KEGG" id="asu:Asuc_0212"/>
<dbReference type="eggNOG" id="COG2265">
    <property type="taxonomic scope" value="Bacteria"/>
</dbReference>
<dbReference type="HOGENOM" id="CLU_014689_0_0_6"/>
<dbReference type="OrthoDB" id="9804590at2"/>
<dbReference type="Proteomes" id="UP000001114">
    <property type="component" value="Chromosome"/>
</dbReference>
<dbReference type="GO" id="GO:0051539">
    <property type="term" value="F:4 iron, 4 sulfur cluster binding"/>
    <property type="evidence" value="ECO:0007669"/>
    <property type="project" value="UniProtKB-KW"/>
</dbReference>
<dbReference type="GO" id="GO:0005506">
    <property type="term" value="F:iron ion binding"/>
    <property type="evidence" value="ECO:0007669"/>
    <property type="project" value="UniProtKB-UniRule"/>
</dbReference>
<dbReference type="GO" id="GO:0070041">
    <property type="term" value="F:rRNA (uridine-C5-)-methyltransferase activity"/>
    <property type="evidence" value="ECO:0007669"/>
    <property type="project" value="UniProtKB-UniRule"/>
</dbReference>
<dbReference type="GO" id="GO:0070475">
    <property type="term" value="P:rRNA base methylation"/>
    <property type="evidence" value="ECO:0007669"/>
    <property type="project" value="TreeGrafter"/>
</dbReference>
<dbReference type="CDD" id="cd02440">
    <property type="entry name" value="AdoMet_MTases"/>
    <property type="match status" value="1"/>
</dbReference>
<dbReference type="Gene3D" id="2.40.50.1070">
    <property type="match status" value="1"/>
</dbReference>
<dbReference type="Gene3D" id="3.40.50.150">
    <property type="entry name" value="Vaccinia Virus protein VP39"/>
    <property type="match status" value="1"/>
</dbReference>
<dbReference type="HAMAP" id="MF_01012">
    <property type="entry name" value="23SrRNA_methyltr_RlmC"/>
    <property type="match status" value="1"/>
</dbReference>
<dbReference type="InterPro" id="IPR011825">
    <property type="entry name" value="23SrRNA_MeTrfase_RlmC"/>
</dbReference>
<dbReference type="InterPro" id="IPR030390">
    <property type="entry name" value="MeTrfase_TrmA_AS"/>
</dbReference>
<dbReference type="InterPro" id="IPR030391">
    <property type="entry name" value="MeTrfase_TrmA_CS"/>
</dbReference>
<dbReference type="InterPro" id="IPR029063">
    <property type="entry name" value="SAM-dependent_MTases_sf"/>
</dbReference>
<dbReference type="InterPro" id="IPR010280">
    <property type="entry name" value="U5_MeTrfase_fam"/>
</dbReference>
<dbReference type="NCBIfam" id="TIGR02085">
    <property type="entry name" value="meth_trns_rumB"/>
    <property type="match status" value="1"/>
</dbReference>
<dbReference type="PANTHER" id="PTHR11061">
    <property type="entry name" value="RNA M5U METHYLTRANSFERASE"/>
    <property type="match status" value="1"/>
</dbReference>
<dbReference type="PANTHER" id="PTHR11061:SF30">
    <property type="entry name" value="TRNA (URACIL(54)-C(5))-METHYLTRANSFERASE"/>
    <property type="match status" value="1"/>
</dbReference>
<dbReference type="Pfam" id="PF05958">
    <property type="entry name" value="tRNA_U5-meth_tr"/>
    <property type="match status" value="1"/>
</dbReference>
<dbReference type="SUPFAM" id="SSF53335">
    <property type="entry name" value="S-adenosyl-L-methionine-dependent methyltransferases"/>
    <property type="match status" value="1"/>
</dbReference>
<dbReference type="PROSITE" id="PS51687">
    <property type="entry name" value="SAM_MT_RNA_M5U"/>
    <property type="match status" value="1"/>
</dbReference>
<dbReference type="PROSITE" id="PS01230">
    <property type="entry name" value="TRMA_1"/>
    <property type="match status" value="1"/>
</dbReference>
<dbReference type="PROSITE" id="PS01231">
    <property type="entry name" value="TRMA_2"/>
    <property type="match status" value="1"/>
</dbReference>
<evidence type="ECO:0000255" key="1">
    <source>
        <dbReference type="HAMAP-Rule" id="MF_01012"/>
    </source>
</evidence>
<feature type="chain" id="PRO_0000414817" description="23S rRNA (uracil(747)-C(5))-methyltransferase RlmC">
    <location>
        <begin position="1"/>
        <end position="383"/>
    </location>
</feature>
<feature type="active site" description="Nucleophile" evidence="1">
    <location>
        <position position="342"/>
    </location>
</feature>
<feature type="binding site" evidence="1">
    <location>
        <position position="3"/>
    </location>
    <ligand>
        <name>[4Fe-4S] cluster</name>
        <dbReference type="ChEBI" id="CHEBI:49883"/>
    </ligand>
</feature>
<feature type="binding site" evidence="1">
    <location>
        <position position="11"/>
    </location>
    <ligand>
        <name>[4Fe-4S] cluster</name>
        <dbReference type="ChEBI" id="CHEBI:49883"/>
    </ligand>
</feature>
<feature type="binding site" evidence="1">
    <location>
        <position position="14"/>
    </location>
    <ligand>
        <name>[4Fe-4S] cluster</name>
        <dbReference type="ChEBI" id="CHEBI:49883"/>
    </ligand>
</feature>
<feature type="binding site" evidence="1">
    <location>
        <position position="89"/>
    </location>
    <ligand>
        <name>[4Fe-4S] cluster</name>
        <dbReference type="ChEBI" id="CHEBI:49883"/>
    </ligand>
</feature>
<feature type="binding site" evidence="1">
    <location>
        <position position="214"/>
    </location>
    <ligand>
        <name>S-adenosyl-L-methionine</name>
        <dbReference type="ChEBI" id="CHEBI:59789"/>
    </ligand>
</feature>
<feature type="binding site" evidence="1">
    <location>
        <position position="243"/>
    </location>
    <ligand>
        <name>S-adenosyl-L-methionine</name>
        <dbReference type="ChEBI" id="CHEBI:59789"/>
    </ligand>
</feature>
<feature type="binding site" evidence="1">
    <location>
        <position position="270"/>
    </location>
    <ligand>
        <name>S-adenosyl-L-methionine</name>
        <dbReference type="ChEBI" id="CHEBI:59789"/>
    </ligand>
</feature>
<feature type="binding site" evidence="1">
    <location>
        <position position="315"/>
    </location>
    <ligand>
        <name>S-adenosyl-L-methionine</name>
        <dbReference type="ChEBI" id="CHEBI:59789"/>
    </ligand>
</feature>
<sequence>MNCPHYQTQTCISCRWLETPYADQLTQKQTHLQQQISILDQSRLEWIPPFQSAQSGFRNKAKMVVNGTVERPILGIINERNQPADLTDCPLYPARFAEIFSVLKDFIGRAGLVPYNIAKQKGELKYILLTESRANQTLMLRFVLRSETKLPLMRRELAGLSTKIPDLAVVTANIQPQHAAILEGQKEIFLTEQQVLEERFNGIPLFIRPQGFFQTNPAVAEGLYGTAQNWVKNLPVQRLWDLFCGVGGFGLHCAAALQANTPDVALTGIEISPSAIYSAALSAEKCGLKNVSFQSLDAANFALNQDDKPDLVIVNPPRRGIGKPLAEFLNNLRPQFLLYSSCNAVTMGSDLQSLTHYQMRKIRLFDMFPHTAHYEVLTLLTLK</sequence>
<gene>
    <name evidence="1" type="primary">rlmC</name>
    <name type="ordered locus">Asuc_0212</name>
</gene>
<keyword id="KW-0004">4Fe-4S</keyword>
<keyword id="KW-0408">Iron</keyword>
<keyword id="KW-0411">Iron-sulfur</keyword>
<keyword id="KW-0479">Metal-binding</keyword>
<keyword id="KW-0489">Methyltransferase</keyword>
<keyword id="KW-1185">Reference proteome</keyword>
<keyword id="KW-0698">rRNA processing</keyword>
<keyword id="KW-0949">S-adenosyl-L-methionine</keyword>
<keyword id="KW-0808">Transferase</keyword>
<reference key="1">
    <citation type="journal article" date="2010" name="BMC Genomics">
        <title>A genomic perspective on the potential of Actinobacillus succinogenes for industrial succinate production.</title>
        <authorList>
            <person name="McKinlay J.B."/>
            <person name="Laivenieks M."/>
            <person name="Schindler B.D."/>
            <person name="McKinlay A.A."/>
            <person name="Siddaramappa S."/>
            <person name="Challacombe J.F."/>
            <person name="Lowry S.R."/>
            <person name="Clum A."/>
            <person name="Lapidus A.L."/>
            <person name="Burkhart K.B."/>
            <person name="Harkins V."/>
            <person name="Vieille C."/>
        </authorList>
    </citation>
    <scope>NUCLEOTIDE SEQUENCE [LARGE SCALE GENOMIC DNA]</scope>
    <source>
        <strain>ATCC 55618 / DSM 22257 / CCUG 43843 / 130Z</strain>
    </source>
</reference>
<proteinExistence type="inferred from homology"/>
<accession>A6VKU5</accession>
<comment type="function">
    <text evidence="1">Catalyzes the formation of 5-methyl-uridine at position 747 (m5U747) in 23S rRNA.</text>
</comment>
<comment type="catalytic activity">
    <reaction evidence="1">
        <text>uridine(747) in 23S rRNA + S-adenosyl-L-methionine = 5-methyluridine(747) in 23S rRNA + S-adenosyl-L-homocysteine + H(+)</text>
        <dbReference type="Rhea" id="RHEA:42628"/>
        <dbReference type="Rhea" id="RHEA-COMP:10154"/>
        <dbReference type="Rhea" id="RHEA-COMP:10155"/>
        <dbReference type="ChEBI" id="CHEBI:15378"/>
        <dbReference type="ChEBI" id="CHEBI:57856"/>
        <dbReference type="ChEBI" id="CHEBI:59789"/>
        <dbReference type="ChEBI" id="CHEBI:65315"/>
        <dbReference type="ChEBI" id="CHEBI:74447"/>
        <dbReference type="EC" id="2.1.1.189"/>
    </reaction>
</comment>
<comment type="similarity">
    <text evidence="1">Belongs to the class I-like SAM-binding methyltransferase superfamily. RNA M5U methyltransferase family. RlmC subfamily.</text>
</comment>